<accession>B2UX19</accession>
<feature type="chain" id="PRO_1000135345" description="Phosphoribosyl-AMP cyclohydrolase">
    <location>
        <begin position="1"/>
        <end position="109"/>
    </location>
</feature>
<feature type="binding site" evidence="1">
    <location>
        <position position="80"/>
    </location>
    <ligand>
        <name>Mg(2+)</name>
        <dbReference type="ChEBI" id="CHEBI:18420"/>
    </ligand>
</feature>
<feature type="binding site" evidence="1">
    <location>
        <position position="81"/>
    </location>
    <ligand>
        <name>Zn(2+)</name>
        <dbReference type="ChEBI" id="CHEBI:29105"/>
        <note>ligand shared between dimeric partners</note>
    </ligand>
</feature>
<feature type="binding site" evidence="1">
    <location>
        <position position="82"/>
    </location>
    <ligand>
        <name>Mg(2+)</name>
        <dbReference type="ChEBI" id="CHEBI:18420"/>
    </ligand>
</feature>
<feature type="binding site" evidence="1">
    <location>
        <position position="84"/>
    </location>
    <ligand>
        <name>Mg(2+)</name>
        <dbReference type="ChEBI" id="CHEBI:18420"/>
    </ligand>
</feature>
<feature type="binding site" evidence="1">
    <location>
        <position position="97"/>
    </location>
    <ligand>
        <name>Zn(2+)</name>
        <dbReference type="ChEBI" id="CHEBI:29105"/>
        <note>ligand shared between dimeric partners</note>
    </ligand>
</feature>
<feature type="binding site" evidence="1">
    <location>
        <position position="104"/>
    </location>
    <ligand>
        <name>Zn(2+)</name>
        <dbReference type="ChEBI" id="CHEBI:29105"/>
        <note>ligand shared between dimeric partners</note>
    </ligand>
</feature>
<protein>
    <recommendedName>
        <fullName evidence="1">Phosphoribosyl-AMP cyclohydrolase</fullName>
        <shortName evidence="1">PRA-CH</shortName>
        <ecNumber evidence="1">3.5.4.19</ecNumber>
    </recommendedName>
</protein>
<proteinExistence type="inferred from homology"/>
<sequence>MNIEERINIINFDKGNGLIPAVIQDYKSKEVLMLGYMSKESLKKTLEGDTTWFYSRSRRKLWNKGSTSGHFQYIKEIKIDCDNDTILISVNQKGAACHTGNKSCFYRDL</sequence>
<name>HIS3_CLOBA</name>
<organism>
    <name type="scientific">Clostridium botulinum (strain Alaska E43 / Type E3)</name>
    <dbReference type="NCBI Taxonomy" id="508767"/>
    <lineage>
        <taxon>Bacteria</taxon>
        <taxon>Bacillati</taxon>
        <taxon>Bacillota</taxon>
        <taxon>Clostridia</taxon>
        <taxon>Eubacteriales</taxon>
        <taxon>Clostridiaceae</taxon>
        <taxon>Clostridium</taxon>
    </lineage>
</organism>
<evidence type="ECO:0000255" key="1">
    <source>
        <dbReference type="HAMAP-Rule" id="MF_01021"/>
    </source>
</evidence>
<gene>
    <name evidence="1" type="primary">hisI</name>
    <name type="ordered locus">CLH_2624</name>
</gene>
<keyword id="KW-0028">Amino-acid biosynthesis</keyword>
<keyword id="KW-0963">Cytoplasm</keyword>
<keyword id="KW-0368">Histidine biosynthesis</keyword>
<keyword id="KW-0378">Hydrolase</keyword>
<keyword id="KW-0460">Magnesium</keyword>
<keyword id="KW-0479">Metal-binding</keyword>
<keyword id="KW-0862">Zinc</keyword>
<dbReference type="EC" id="3.5.4.19" evidence="1"/>
<dbReference type="EMBL" id="CP001078">
    <property type="protein sequence ID" value="ACD53348.1"/>
    <property type="molecule type" value="Genomic_DNA"/>
</dbReference>
<dbReference type="RefSeq" id="WP_012451273.1">
    <property type="nucleotide sequence ID" value="NC_010723.1"/>
</dbReference>
<dbReference type="SMR" id="B2UX19"/>
<dbReference type="KEGG" id="cbt:CLH_2624"/>
<dbReference type="HOGENOM" id="CLU_048577_5_3_9"/>
<dbReference type="UniPathway" id="UPA00031">
    <property type="reaction ID" value="UER00008"/>
</dbReference>
<dbReference type="GO" id="GO:0005737">
    <property type="term" value="C:cytoplasm"/>
    <property type="evidence" value="ECO:0007669"/>
    <property type="project" value="UniProtKB-SubCell"/>
</dbReference>
<dbReference type="GO" id="GO:0000287">
    <property type="term" value="F:magnesium ion binding"/>
    <property type="evidence" value="ECO:0007669"/>
    <property type="project" value="UniProtKB-UniRule"/>
</dbReference>
<dbReference type="GO" id="GO:0004635">
    <property type="term" value="F:phosphoribosyl-AMP cyclohydrolase activity"/>
    <property type="evidence" value="ECO:0007669"/>
    <property type="project" value="UniProtKB-UniRule"/>
</dbReference>
<dbReference type="GO" id="GO:0008270">
    <property type="term" value="F:zinc ion binding"/>
    <property type="evidence" value="ECO:0007669"/>
    <property type="project" value="UniProtKB-UniRule"/>
</dbReference>
<dbReference type="GO" id="GO:0000105">
    <property type="term" value="P:L-histidine biosynthetic process"/>
    <property type="evidence" value="ECO:0007669"/>
    <property type="project" value="UniProtKB-UniRule"/>
</dbReference>
<dbReference type="FunFam" id="3.10.20.810:FF:000001">
    <property type="entry name" value="Histidine biosynthesis bifunctional protein HisIE"/>
    <property type="match status" value="1"/>
</dbReference>
<dbReference type="Gene3D" id="3.10.20.810">
    <property type="entry name" value="Phosphoribosyl-AMP cyclohydrolase"/>
    <property type="match status" value="1"/>
</dbReference>
<dbReference type="HAMAP" id="MF_01021">
    <property type="entry name" value="HisI"/>
    <property type="match status" value="1"/>
</dbReference>
<dbReference type="InterPro" id="IPR026660">
    <property type="entry name" value="PRA-CH"/>
</dbReference>
<dbReference type="InterPro" id="IPR002496">
    <property type="entry name" value="PRib_AMP_CycHydrolase_dom"/>
</dbReference>
<dbReference type="InterPro" id="IPR038019">
    <property type="entry name" value="PRib_AMP_CycHydrolase_sf"/>
</dbReference>
<dbReference type="NCBIfam" id="NF000768">
    <property type="entry name" value="PRK00051.1"/>
    <property type="match status" value="1"/>
</dbReference>
<dbReference type="PANTHER" id="PTHR42945">
    <property type="entry name" value="HISTIDINE BIOSYNTHESIS BIFUNCTIONAL PROTEIN"/>
    <property type="match status" value="1"/>
</dbReference>
<dbReference type="PANTHER" id="PTHR42945:SF1">
    <property type="entry name" value="HISTIDINE BIOSYNTHESIS BIFUNCTIONAL PROTEIN HIS7"/>
    <property type="match status" value="1"/>
</dbReference>
<dbReference type="Pfam" id="PF01502">
    <property type="entry name" value="PRA-CH"/>
    <property type="match status" value="1"/>
</dbReference>
<dbReference type="SUPFAM" id="SSF141734">
    <property type="entry name" value="HisI-like"/>
    <property type="match status" value="1"/>
</dbReference>
<reference key="1">
    <citation type="submission" date="2008-05" db="EMBL/GenBank/DDBJ databases">
        <title>Complete genome sequence of Clostridium botulinum E3 str. Alaska E43.</title>
        <authorList>
            <person name="Brinkac L.M."/>
            <person name="Brown J.L."/>
            <person name="Bruce D."/>
            <person name="Detter C."/>
            <person name="Munk C."/>
            <person name="Smith L.A."/>
            <person name="Smith T.J."/>
            <person name="Sutton G."/>
            <person name="Brettin T.S."/>
        </authorList>
    </citation>
    <scope>NUCLEOTIDE SEQUENCE [LARGE SCALE GENOMIC DNA]</scope>
    <source>
        <strain>Alaska E43 / Type E3</strain>
    </source>
</reference>
<comment type="function">
    <text evidence="1">Catalyzes the hydrolysis of the adenine ring of phosphoribosyl-AMP.</text>
</comment>
<comment type="catalytic activity">
    <reaction evidence="1">
        <text>1-(5-phospho-beta-D-ribosyl)-5'-AMP + H2O = 1-(5-phospho-beta-D-ribosyl)-5-[(5-phospho-beta-D-ribosylamino)methylideneamino]imidazole-4-carboxamide</text>
        <dbReference type="Rhea" id="RHEA:20049"/>
        <dbReference type="ChEBI" id="CHEBI:15377"/>
        <dbReference type="ChEBI" id="CHEBI:58435"/>
        <dbReference type="ChEBI" id="CHEBI:59457"/>
        <dbReference type="EC" id="3.5.4.19"/>
    </reaction>
</comment>
<comment type="cofactor">
    <cofactor evidence="1">
        <name>Mg(2+)</name>
        <dbReference type="ChEBI" id="CHEBI:18420"/>
    </cofactor>
    <text evidence="1">Binds 1 Mg(2+) ion per subunit.</text>
</comment>
<comment type="cofactor">
    <cofactor evidence="1">
        <name>Zn(2+)</name>
        <dbReference type="ChEBI" id="CHEBI:29105"/>
    </cofactor>
    <text evidence="1">Binds 1 zinc ion per subunit.</text>
</comment>
<comment type="pathway">
    <text evidence="1">Amino-acid biosynthesis; L-histidine biosynthesis; L-histidine from 5-phospho-alpha-D-ribose 1-diphosphate: step 3/9.</text>
</comment>
<comment type="subunit">
    <text evidence="1">Homodimer.</text>
</comment>
<comment type="subcellular location">
    <subcellularLocation>
        <location evidence="1">Cytoplasm</location>
    </subcellularLocation>
</comment>
<comment type="similarity">
    <text evidence="1">Belongs to the PRA-CH family.</text>
</comment>